<sequence length="171" mass="18539">MDKLRAKIRDIPDFPKPGILFRDITPLVKDPAALRLAIHQLVHPFVGEDITAVAGMEARGFIFGALAAWELGVGFVPLRKPGKLPYNVQSIDYDLEYGSARLEVHLDALGVGDRVLMVDDLLATGGTARASCSLVESLGAEVAACAFVIELDALEGREALHGRRVHSLLHY</sequence>
<reference key="1">
    <citation type="journal article" date="2004" name="PLoS Biol.">
        <title>Genomic insights into methanotrophy: the complete genome sequence of Methylococcus capsulatus (Bath).</title>
        <authorList>
            <person name="Ward N.L."/>
            <person name="Larsen O."/>
            <person name="Sakwa J."/>
            <person name="Bruseth L."/>
            <person name="Khouri H.M."/>
            <person name="Durkin A.S."/>
            <person name="Dimitrov G."/>
            <person name="Jiang L."/>
            <person name="Scanlan D."/>
            <person name="Kang K.H."/>
            <person name="Lewis M.R."/>
            <person name="Nelson K.E."/>
            <person name="Methe B.A."/>
            <person name="Wu M."/>
            <person name="Heidelberg J.F."/>
            <person name="Paulsen I.T."/>
            <person name="Fouts D.E."/>
            <person name="Ravel J."/>
            <person name="Tettelin H."/>
            <person name="Ren Q."/>
            <person name="Read T.D."/>
            <person name="DeBoy R.T."/>
            <person name="Seshadri R."/>
            <person name="Salzberg S.L."/>
            <person name="Jensen H.B."/>
            <person name="Birkeland N.K."/>
            <person name="Nelson W.C."/>
            <person name="Dodson R.J."/>
            <person name="Grindhaug S.H."/>
            <person name="Holt I.E."/>
            <person name="Eidhammer I."/>
            <person name="Jonasen I."/>
            <person name="Vanaken S."/>
            <person name="Utterback T.R."/>
            <person name="Feldblyum T.V."/>
            <person name="Fraser C.M."/>
            <person name="Lillehaug J.R."/>
            <person name="Eisen J.A."/>
        </authorList>
    </citation>
    <scope>NUCLEOTIDE SEQUENCE [LARGE SCALE GENOMIC DNA]</scope>
    <source>
        <strain>ATCC 33009 / NCIMB 11132 / Bath</strain>
    </source>
</reference>
<protein>
    <recommendedName>
        <fullName evidence="1">Adenine phosphoribosyltransferase</fullName>
        <shortName evidence="1">APRT</shortName>
        <ecNumber evidence="1">2.4.2.7</ecNumber>
    </recommendedName>
</protein>
<dbReference type="EC" id="2.4.2.7" evidence="1"/>
<dbReference type="EMBL" id="AE017282">
    <property type="protein sequence ID" value="AAU92869.1"/>
    <property type="molecule type" value="Genomic_DNA"/>
</dbReference>
<dbReference type="RefSeq" id="WP_010960140.1">
    <property type="nucleotide sequence ID" value="NC_002977.6"/>
</dbReference>
<dbReference type="SMR" id="Q60AN2"/>
<dbReference type="STRING" id="243233.MCA0816"/>
<dbReference type="GeneID" id="88223128"/>
<dbReference type="KEGG" id="mca:MCA0816"/>
<dbReference type="eggNOG" id="COG0503">
    <property type="taxonomic scope" value="Bacteria"/>
</dbReference>
<dbReference type="HOGENOM" id="CLU_063339_3_3_6"/>
<dbReference type="UniPathway" id="UPA00588">
    <property type="reaction ID" value="UER00646"/>
</dbReference>
<dbReference type="Proteomes" id="UP000006821">
    <property type="component" value="Chromosome"/>
</dbReference>
<dbReference type="GO" id="GO:0005737">
    <property type="term" value="C:cytoplasm"/>
    <property type="evidence" value="ECO:0007669"/>
    <property type="project" value="UniProtKB-SubCell"/>
</dbReference>
<dbReference type="GO" id="GO:0002055">
    <property type="term" value="F:adenine binding"/>
    <property type="evidence" value="ECO:0007669"/>
    <property type="project" value="TreeGrafter"/>
</dbReference>
<dbReference type="GO" id="GO:0003999">
    <property type="term" value="F:adenine phosphoribosyltransferase activity"/>
    <property type="evidence" value="ECO:0007669"/>
    <property type="project" value="UniProtKB-UniRule"/>
</dbReference>
<dbReference type="GO" id="GO:0016208">
    <property type="term" value="F:AMP binding"/>
    <property type="evidence" value="ECO:0007669"/>
    <property type="project" value="TreeGrafter"/>
</dbReference>
<dbReference type="GO" id="GO:0006168">
    <property type="term" value="P:adenine salvage"/>
    <property type="evidence" value="ECO:0007669"/>
    <property type="project" value="InterPro"/>
</dbReference>
<dbReference type="GO" id="GO:0044209">
    <property type="term" value="P:AMP salvage"/>
    <property type="evidence" value="ECO:0007669"/>
    <property type="project" value="UniProtKB-UniRule"/>
</dbReference>
<dbReference type="GO" id="GO:0006166">
    <property type="term" value="P:purine ribonucleoside salvage"/>
    <property type="evidence" value="ECO:0007669"/>
    <property type="project" value="UniProtKB-KW"/>
</dbReference>
<dbReference type="CDD" id="cd06223">
    <property type="entry name" value="PRTases_typeI"/>
    <property type="match status" value="1"/>
</dbReference>
<dbReference type="FunFam" id="3.40.50.2020:FF:000021">
    <property type="entry name" value="Adenine phosphoribosyltransferase"/>
    <property type="match status" value="1"/>
</dbReference>
<dbReference type="Gene3D" id="3.40.50.2020">
    <property type="match status" value="1"/>
</dbReference>
<dbReference type="HAMAP" id="MF_00004">
    <property type="entry name" value="Aden_phosphoribosyltr"/>
    <property type="match status" value="1"/>
</dbReference>
<dbReference type="InterPro" id="IPR005764">
    <property type="entry name" value="Ade_phspho_trans"/>
</dbReference>
<dbReference type="InterPro" id="IPR000836">
    <property type="entry name" value="PRibTrfase_dom"/>
</dbReference>
<dbReference type="InterPro" id="IPR029057">
    <property type="entry name" value="PRTase-like"/>
</dbReference>
<dbReference type="InterPro" id="IPR050054">
    <property type="entry name" value="UPRTase/APRTase"/>
</dbReference>
<dbReference type="NCBIfam" id="TIGR01090">
    <property type="entry name" value="apt"/>
    <property type="match status" value="1"/>
</dbReference>
<dbReference type="NCBIfam" id="NF002634">
    <property type="entry name" value="PRK02304.1-3"/>
    <property type="match status" value="1"/>
</dbReference>
<dbReference type="NCBIfam" id="NF002636">
    <property type="entry name" value="PRK02304.1-5"/>
    <property type="match status" value="1"/>
</dbReference>
<dbReference type="PANTHER" id="PTHR32315">
    <property type="entry name" value="ADENINE PHOSPHORIBOSYLTRANSFERASE"/>
    <property type="match status" value="1"/>
</dbReference>
<dbReference type="PANTHER" id="PTHR32315:SF3">
    <property type="entry name" value="ADENINE PHOSPHORIBOSYLTRANSFERASE"/>
    <property type="match status" value="1"/>
</dbReference>
<dbReference type="Pfam" id="PF00156">
    <property type="entry name" value="Pribosyltran"/>
    <property type="match status" value="1"/>
</dbReference>
<dbReference type="SUPFAM" id="SSF53271">
    <property type="entry name" value="PRTase-like"/>
    <property type="match status" value="1"/>
</dbReference>
<dbReference type="PROSITE" id="PS00103">
    <property type="entry name" value="PUR_PYR_PR_TRANSFER"/>
    <property type="match status" value="1"/>
</dbReference>
<organism>
    <name type="scientific">Methylococcus capsulatus (strain ATCC 33009 / NCIMB 11132 / Bath)</name>
    <dbReference type="NCBI Taxonomy" id="243233"/>
    <lineage>
        <taxon>Bacteria</taxon>
        <taxon>Pseudomonadati</taxon>
        <taxon>Pseudomonadota</taxon>
        <taxon>Gammaproteobacteria</taxon>
        <taxon>Methylococcales</taxon>
        <taxon>Methylococcaceae</taxon>
        <taxon>Methylococcus</taxon>
    </lineage>
</organism>
<gene>
    <name evidence="1" type="primary">apt</name>
    <name type="ordered locus">MCA0816</name>
</gene>
<keyword id="KW-0963">Cytoplasm</keyword>
<keyword id="KW-0328">Glycosyltransferase</keyword>
<keyword id="KW-0660">Purine salvage</keyword>
<keyword id="KW-1185">Reference proteome</keyword>
<keyword id="KW-0808">Transferase</keyword>
<feature type="chain" id="PRO_0000149408" description="Adenine phosphoribosyltransferase">
    <location>
        <begin position="1"/>
        <end position="171"/>
    </location>
</feature>
<evidence type="ECO:0000255" key="1">
    <source>
        <dbReference type="HAMAP-Rule" id="MF_00004"/>
    </source>
</evidence>
<proteinExistence type="inferred from homology"/>
<comment type="function">
    <text evidence="1">Catalyzes a salvage reaction resulting in the formation of AMP, that is energically less costly than de novo synthesis.</text>
</comment>
<comment type="catalytic activity">
    <reaction evidence="1">
        <text>AMP + diphosphate = 5-phospho-alpha-D-ribose 1-diphosphate + adenine</text>
        <dbReference type="Rhea" id="RHEA:16609"/>
        <dbReference type="ChEBI" id="CHEBI:16708"/>
        <dbReference type="ChEBI" id="CHEBI:33019"/>
        <dbReference type="ChEBI" id="CHEBI:58017"/>
        <dbReference type="ChEBI" id="CHEBI:456215"/>
        <dbReference type="EC" id="2.4.2.7"/>
    </reaction>
</comment>
<comment type="pathway">
    <text evidence="1">Purine metabolism; AMP biosynthesis via salvage pathway; AMP from adenine: step 1/1.</text>
</comment>
<comment type="subunit">
    <text evidence="1">Homodimer.</text>
</comment>
<comment type="subcellular location">
    <subcellularLocation>
        <location evidence="1">Cytoplasm</location>
    </subcellularLocation>
</comment>
<comment type="similarity">
    <text evidence="1">Belongs to the purine/pyrimidine phosphoribosyltransferase family.</text>
</comment>
<accession>Q60AN2</accession>
<name>APT_METCA</name>